<dbReference type="EMBL" id="CP000088">
    <property type="protein sequence ID" value="AAZ54234.1"/>
    <property type="molecule type" value="Genomic_DNA"/>
</dbReference>
<dbReference type="RefSeq" id="WP_011290643.1">
    <property type="nucleotide sequence ID" value="NC_007333.1"/>
</dbReference>
<dbReference type="SMR" id="Q47TI0"/>
<dbReference type="STRING" id="269800.Tfu_0196"/>
<dbReference type="KEGG" id="tfu:Tfu_0196"/>
<dbReference type="eggNOG" id="COG0443">
    <property type="taxonomic scope" value="Bacteria"/>
</dbReference>
<dbReference type="HOGENOM" id="CLU_005965_2_4_11"/>
<dbReference type="OrthoDB" id="9766019at2"/>
<dbReference type="GO" id="GO:0005524">
    <property type="term" value="F:ATP binding"/>
    <property type="evidence" value="ECO:0007669"/>
    <property type="project" value="UniProtKB-UniRule"/>
</dbReference>
<dbReference type="GO" id="GO:0140662">
    <property type="term" value="F:ATP-dependent protein folding chaperone"/>
    <property type="evidence" value="ECO:0007669"/>
    <property type="project" value="InterPro"/>
</dbReference>
<dbReference type="GO" id="GO:0051082">
    <property type="term" value="F:unfolded protein binding"/>
    <property type="evidence" value="ECO:0007669"/>
    <property type="project" value="InterPro"/>
</dbReference>
<dbReference type="CDD" id="cd10234">
    <property type="entry name" value="ASKHA_NBD_HSP70_DnaK-like"/>
    <property type="match status" value="1"/>
</dbReference>
<dbReference type="FunFam" id="2.60.34.10:FF:000014">
    <property type="entry name" value="Chaperone protein DnaK HSP70"/>
    <property type="match status" value="1"/>
</dbReference>
<dbReference type="FunFam" id="1.20.1270.10:FF:000001">
    <property type="entry name" value="Molecular chaperone DnaK"/>
    <property type="match status" value="1"/>
</dbReference>
<dbReference type="FunFam" id="3.30.420.40:FF:000071">
    <property type="entry name" value="Molecular chaperone DnaK"/>
    <property type="match status" value="1"/>
</dbReference>
<dbReference type="FunFam" id="3.90.640.10:FF:000003">
    <property type="entry name" value="Molecular chaperone DnaK"/>
    <property type="match status" value="1"/>
</dbReference>
<dbReference type="Gene3D" id="1.20.1270.10">
    <property type="match status" value="1"/>
</dbReference>
<dbReference type="Gene3D" id="3.30.420.40">
    <property type="match status" value="2"/>
</dbReference>
<dbReference type="Gene3D" id="3.90.640.10">
    <property type="entry name" value="Actin, Chain A, domain 4"/>
    <property type="match status" value="1"/>
</dbReference>
<dbReference type="Gene3D" id="2.60.34.10">
    <property type="entry name" value="Substrate Binding Domain Of DNAk, Chain A, domain 1"/>
    <property type="match status" value="1"/>
</dbReference>
<dbReference type="HAMAP" id="MF_00332">
    <property type="entry name" value="DnaK"/>
    <property type="match status" value="1"/>
</dbReference>
<dbReference type="InterPro" id="IPR043129">
    <property type="entry name" value="ATPase_NBD"/>
</dbReference>
<dbReference type="InterPro" id="IPR012725">
    <property type="entry name" value="Chaperone_DnaK"/>
</dbReference>
<dbReference type="InterPro" id="IPR018181">
    <property type="entry name" value="Heat_shock_70_CS"/>
</dbReference>
<dbReference type="InterPro" id="IPR029048">
    <property type="entry name" value="HSP70_C_sf"/>
</dbReference>
<dbReference type="InterPro" id="IPR029047">
    <property type="entry name" value="HSP70_peptide-bd_sf"/>
</dbReference>
<dbReference type="InterPro" id="IPR013126">
    <property type="entry name" value="Hsp_70_fam"/>
</dbReference>
<dbReference type="NCBIfam" id="NF001413">
    <property type="entry name" value="PRK00290.1"/>
    <property type="match status" value="1"/>
</dbReference>
<dbReference type="NCBIfam" id="TIGR02350">
    <property type="entry name" value="prok_dnaK"/>
    <property type="match status" value="1"/>
</dbReference>
<dbReference type="PANTHER" id="PTHR19375">
    <property type="entry name" value="HEAT SHOCK PROTEIN 70KDA"/>
    <property type="match status" value="1"/>
</dbReference>
<dbReference type="Pfam" id="PF00012">
    <property type="entry name" value="HSP70"/>
    <property type="match status" value="1"/>
</dbReference>
<dbReference type="PRINTS" id="PR00301">
    <property type="entry name" value="HEATSHOCK70"/>
</dbReference>
<dbReference type="SUPFAM" id="SSF53067">
    <property type="entry name" value="Actin-like ATPase domain"/>
    <property type="match status" value="2"/>
</dbReference>
<dbReference type="SUPFAM" id="SSF100934">
    <property type="entry name" value="Heat shock protein 70kD (HSP70), C-terminal subdomain"/>
    <property type="match status" value="1"/>
</dbReference>
<dbReference type="SUPFAM" id="SSF100920">
    <property type="entry name" value="Heat shock protein 70kD (HSP70), peptide-binding domain"/>
    <property type="match status" value="1"/>
</dbReference>
<dbReference type="PROSITE" id="PS00297">
    <property type="entry name" value="HSP70_1"/>
    <property type="match status" value="1"/>
</dbReference>
<dbReference type="PROSITE" id="PS00329">
    <property type="entry name" value="HSP70_2"/>
    <property type="match status" value="1"/>
</dbReference>
<dbReference type="PROSITE" id="PS01036">
    <property type="entry name" value="HSP70_3"/>
    <property type="match status" value="1"/>
</dbReference>
<organism>
    <name type="scientific">Thermobifida fusca (strain YX)</name>
    <dbReference type="NCBI Taxonomy" id="269800"/>
    <lineage>
        <taxon>Bacteria</taxon>
        <taxon>Bacillati</taxon>
        <taxon>Actinomycetota</taxon>
        <taxon>Actinomycetes</taxon>
        <taxon>Streptosporangiales</taxon>
        <taxon>Nocardiopsidaceae</taxon>
        <taxon>Thermobifida</taxon>
    </lineage>
</organism>
<gene>
    <name evidence="1" type="primary">dnaK</name>
    <name type="ordered locus">Tfu_0196</name>
</gene>
<sequence length="613" mass="66042">MARAVGIDLGTTNSVVAVLEGGEPTVIANAEGARTTPSVVAFAKNGEVLVGEIAKRQAVTNVERTIRSVKRHMGTDWKTHIDGKDFTPQQISAFVLQKLKRDAEAYLGEEVTDAVITVPAYFSDAERQATKDAGKIAGLNVLRIINEPTSAALAYHLEKEGEATILVFDLGGGTFDVSLLDVGDGVVEVKATHGDNHLGGDDWDQAVVDWLVERFKSSNGIDLSKDKMAMQRLREAAEKAKIELSSSTETSINLPYITASAEGPLHLDEKLTRAEFQRLTSHLLERTKGPFFQVIKDAGISVDQIDHVVLVGGSTRMPAVVDLVRELTGGKEPNKGVNPDEVVAVGAALQAGVLKGDVKDVLLLDVTPLSLGIETKGGVFTKLIERNTAIPTKRSEIFTTAEDNQPSVQIQVYQGEREIAKYNKKLGVFDLTGIPPAPRGVPQIEVTFDIDANGIVNVTAKDLGTGKEQSVTITGGSALPKEDIERMIREAEEYAEQDRKRREEAETRNNAESLVYQTEKVISENEDKIPEDVKNETKEALDGLKKALEGSDIEAIRSASEKVALASQKIGSAIYSQSQQASGAAAGGQQNAEDAEVVDAEIVDEEPKREGNS</sequence>
<feature type="chain" id="PRO_0000226022" description="Chaperone protein DnaK">
    <location>
        <begin position="1"/>
        <end position="613"/>
    </location>
</feature>
<feature type="region of interest" description="Disordered" evidence="2">
    <location>
        <begin position="495"/>
        <end position="535"/>
    </location>
</feature>
<feature type="region of interest" description="Disordered" evidence="2">
    <location>
        <begin position="575"/>
        <end position="613"/>
    </location>
</feature>
<feature type="compositionally biased region" description="Basic and acidic residues" evidence="2">
    <location>
        <begin position="495"/>
        <end position="509"/>
    </location>
</feature>
<feature type="compositionally biased region" description="Basic and acidic residues" evidence="2">
    <location>
        <begin position="521"/>
        <end position="535"/>
    </location>
</feature>
<feature type="compositionally biased region" description="Low complexity" evidence="2">
    <location>
        <begin position="575"/>
        <end position="592"/>
    </location>
</feature>
<feature type="compositionally biased region" description="Acidic residues" evidence="2">
    <location>
        <begin position="593"/>
        <end position="604"/>
    </location>
</feature>
<feature type="modified residue" description="Phosphothreonine; by autocatalysis" evidence="1">
    <location>
        <position position="174"/>
    </location>
</feature>
<comment type="function">
    <text evidence="1">Acts as a chaperone.</text>
</comment>
<comment type="induction">
    <text evidence="1">By stress conditions e.g. heat shock.</text>
</comment>
<comment type="similarity">
    <text evidence="1">Belongs to the heat shock protein 70 family.</text>
</comment>
<proteinExistence type="inferred from homology"/>
<name>DNAK_THEFY</name>
<keyword id="KW-0067">ATP-binding</keyword>
<keyword id="KW-0143">Chaperone</keyword>
<keyword id="KW-0547">Nucleotide-binding</keyword>
<keyword id="KW-0597">Phosphoprotein</keyword>
<keyword id="KW-0346">Stress response</keyword>
<evidence type="ECO:0000255" key="1">
    <source>
        <dbReference type="HAMAP-Rule" id="MF_00332"/>
    </source>
</evidence>
<evidence type="ECO:0000256" key="2">
    <source>
        <dbReference type="SAM" id="MobiDB-lite"/>
    </source>
</evidence>
<protein>
    <recommendedName>
        <fullName evidence="1">Chaperone protein DnaK</fullName>
    </recommendedName>
    <alternativeName>
        <fullName evidence="1">HSP70</fullName>
    </alternativeName>
    <alternativeName>
        <fullName evidence="1">Heat shock 70 kDa protein</fullName>
    </alternativeName>
    <alternativeName>
        <fullName evidence="1">Heat shock protein 70</fullName>
    </alternativeName>
</protein>
<accession>Q47TI0</accession>
<reference key="1">
    <citation type="journal article" date="2007" name="J. Bacteriol.">
        <title>Genome sequence and analysis of the soil cellulolytic actinomycete Thermobifida fusca YX.</title>
        <authorList>
            <person name="Lykidis A."/>
            <person name="Mavromatis K."/>
            <person name="Ivanova N."/>
            <person name="Anderson I."/>
            <person name="Land M."/>
            <person name="DiBartolo G."/>
            <person name="Martinez M."/>
            <person name="Lapidus A."/>
            <person name="Lucas S."/>
            <person name="Copeland A."/>
            <person name="Richardson P."/>
            <person name="Wilson D.B."/>
            <person name="Kyrpides N."/>
        </authorList>
    </citation>
    <scope>NUCLEOTIDE SEQUENCE [LARGE SCALE GENOMIC DNA]</scope>
    <source>
        <strain>YX</strain>
    </source>
</reference>